<keyword id="KW-0030">Aminoacyl-tRNA synthetase</keyword>
<keyword id="KW-0067">ATP-binding</keyword>
<keyword id="KW-0963">Cytoplasm</keyword>
<keyword id="KW-0436">Ligase</keyword>
<keyword id="KW-0547">Nucleotide-binding</keyword>
<keyword id="KW-0648">Protein biosynthesis</keyword>
<proteinExistence type="inferred from homology"/>
<evidence type="ECO:0000255" key="1">
    <source>
        <dbReference type="HAMAP-Rule" id="MF_01569"/>
    </source>
</evidence>
<feature type="chain" id="PRO_0000248804" description="Proline--tRNA ligase">
    <location>
        <begin position="1"/>
        <end position="572"/>
    </location>
</feature>
<comment type="function">
    <text evidence="1">Catalyzes the attachment of proline to tRNA(Pro) in a two-step reaction: proline is first activated by ATP to form Pro-AMP and then transferred to the acceptor end of tRNA(Pro). As ProRS can inadvertently accommodate and process non-cognate amino acids such as alanine and cysteine, to avoid such errors it has two additional distinct editing activities against alanine. One activity is designated as 'pretransfer' editing and involves the tRNA(Pro)-independent hydrolysis of activated Ala-AMP. The other activity is designated 'posttransfer' editing and involves deacylation of mischarged Ala-tRNA(Pro). The misacylated Cys-tRNA(Pro) is not edited by ProRS.</text>
</comment>
<comment type="catalytic activity">
    <reaction evidence="1">
        <text>tRNA(Pro) + L-proline + ATP = L-prolyl-tRNA(Pro) + AMP + diphosphate</text>
        <dbReference type="Rhea" id="RHEA:14305"/>
        <dbReference type="Rhea" id="RHEA-COMP:9700"/>
        <dbReference type="Rhea" id="RHEA-COMP:9702"/>
        <dbReference type="ChEBI" id="CHEBI:30616"/>
        <dbReference type="ChEBI" id="CHEBI:33019"/>
        <dbReference type="ChEBI" id="CHEBI:60039"/>
        <dbReference type="ChEBI" id="CHEBI:78442"/>
        <dbReference type="ChEBI" id="CHEBI:78532"/>
        <dbReference type="ChEBI" id="CHEBI:456215"/>
        <dbReference type="EC" id="6.1.1.15"/>
    </reaction>
</comment>
<comment type="subunit">
    <text evidence="1">Homodimer.</text>
</comment>
<comment type="subcellular location">
    <subcellularLocation>
        <location evidence="1">Cytoplasm</location>
    </subcellularLocation>
</comment>
<comment type="domain">
    <text evidence="1">Consists of three domains: the N-terminal catalytic domain, the editing domain and the C-terminal anticodon-binding domain.</text>
</comment>
<comment type="similarity">
    <text evidence="1">Belongs to the class-II aminoacyl-tRNA synthetase family. ProS type 1 subfamily.</text>
</comment>
<sequence>MKTSSLLLATTRETPADAVVISHQLMLRAGIIRPLAGGLYNWLPLGVRVLRKVEAIIRDEMNKAQAQELLMPVVQPMELWEESGRAEAYGPELLRFKDRHQREFALGPTHEEIITDLVRKEIRSYKQLPANFYQIQTKFRDEIRPRFGVMRSREFIMKDAYSFHMDKDSLQKTYEDMYDTYNRIFTRLGLDFRPVQADTGSIGGEGSHEFHVLADSGEDDIAFSSDSDYAANIELAEALAPRGERAAATEELTKVETPNKHSIEDVCDFLQLKKKKVAKTLVVKGATEEHPVVALVIRGDHDLNEIKAEKLDLVAEPFEMATDEEIQNAVGCKAGSIGPVNLSIPVIVDRTAAHMADFVCGANEDGFHFTGANWDRDATPTLVADIRNVVKGDPSPCGKGKIEIRRGIEVGHIFQLGNKYSEALNATVLNENSRAQILEMGCYGIGVTRVVAAAIEQNYDDKGIIWPEAIAPFQVCIVPMQMHKSPRVEEAVMTLYNELTAKGIEVLLDDRKERPGVMFNDMELIGIPHRIVIGERGLDKGEIEYKHRRDEKSQDIPEAEFMEFLLGKLSGN</sequence>
<protein>
    <recommendedName>
        <fullName evidence="1">Proline--tRNA ligase</fullName>
        <ecNumber evidence="1">6.1.1.15</ecNumber>
    </recommendedName>
    <alternativeName>
        <fullName evidence="1">Prolyl-tRNA synthetase</fullName>
        <shortName evidence="1">ProRS</shortName>
    </alternativeName>
</protein>
<name>SYP_HYDCU</name>
<accession>Q31GQ3</accession>
<dbReference type="EC" id="6.1.1.15" evidence="1"/>
<dbReference type="EMBL" id="CP000109">
    <property type="protein sequence ID" value="ABB41670.1"/>
    <property type="molecule type" value="Genomic_DNA"/>
</dbReference>
<dbReference type="SMR" id="Q31GQ3"/>
<dbReference type="STRING" id="317025.Tcr_1075"/>
<dbReference type="KEGG" id="tcx:Tcr_1075"/>
<dbReference type="eggNOG" id="COG0442">
    <property type="taxonomic scope" value="Bacteria"/>
</dbReference>
<dbReference type="HOGENOM" id="CLU_016739_0_0_6"/>
<dbReference type="OrthoDB" id="9809052at2"/>
<dbReference type="GO" id="GO:0005829">
    <property type="term" value="C:cytosol"/>
    <property type="evidence" value="ECO:0007669"/>
    <property type="project" value="TreeGrafter"/>
</dbReference>
<dbReference type="GO" id="GO:0002161">
    <property type="term" value="F:aminoacyl-tRNA deacylase activity"/>
    <property type="evidence" value="ECO:0007669"/>
    <property type="project" value="InterPro"/>
</dbReference>
<dbReference type="GO" id="GO:0005524">
    <property type="term" value="F:ATP binding"/>
    <property type="evidence" value="ECO:0007669"/>
    <property type="project" value="UniProtKB-UniRule"/>
</dbReference>
<dbReference type="GO" id="GO:0004827">
    <property type="term" value="F:proline-tRNA ligase activity"/>
    <property type="evidence" value="ECO:0007669"/>
    <property type="project" value="UniProtKB-UniRule"/>
</dbReference>
<dbReference type="GO" id="GO:0006433">
    <property type="term" value="P:prolyl-tRNA aminoacylation"/>
    <property type="evidence" value="ECO:0007669"/>
    <property type="project" value="UniProtKB-UniRule"/>
</dbReference>
<dbReference type="CDD" id="cd04334">
    <property type="entry name" value="ProRS-INS"/>
    <property type="match status" value="1"/>
</dbReference>
<dbReference type="CDD" id="cd00861">
    <property type="entry name" value="ProRS_anticodon_short"/>
    <property type="match status" value="1"/>
</dbReference>
<dbReference type="CDD" id="cd00779">
    <property type="entry name" value="ProRS_core_prok"/>
    <property type="match status" value="1"/>
</dbReference>
<dbReference type="FunFam" id="3.30.930.10:FF:000043">
    <property type="entry name" value="Proline--tRNA ligase"/>
    <property type="match status" value="1"/>
</dbReference>
<dbReference type="FunFam" id="3.30.930.10:FF:000097">
    <property type="entry name" value="Proline--tRNA ligase"/>
    <property type="match status" value="1"/>
</dbReference>
<dbReference type="FunFam" id="3.40.50.800:FF:000006">
    <property type="entry name" value="Proline--tRNA ligase"/>
    <property type="match status" value="1"/>
</dbReference>
<dbReference type="Gene3D" id="3.40.50.800">
    <property type="entry name" value="Anticodon-binding domain"/>
    <property type="match status" value="1"/>
</dbReference>
<dbReference type="Gene3D" id="3.30.930.10">
    <property type="entry name" value="Bira Bifunctional Protein, Domain 2"/>
    <property type="match status" value="2"/>
</dbReference>
<dbReference type="Gene3D" id="3.90.960.10">
    <property type="entry name" value="YbaK/aminoacyl-tRNA synthetase-associated domain"/>
    <property type="match status" value="1"/>
</dbReference>
<dbReference type="HAMAP" id="MF_01569">
    <property type="entry name" value="Pro_tRNA_synth_type1"/>
    <property type="match status" value="1"/>
</dbReference>
<dbReference type="InterPro" id="IPR002314">
    <property type="entry name" value="aa-tRNA-synt_IIb"/>
</dbReference>
<dbReference type="InterPro" id="IPR006195">
    <property type="entry name" value="aa-tRNA-synth_II"/>
</dbReference>
<dbReference type="InterPro" id="IPR045864">
    <property type="entry name" value="aa-tRNA-synth_II/BPL/LPL"/>
</dbReference>
<dbReference type="InterPro" id="IPR004154">
    <property type="entry name" value="Anticodon-bd"/>
</dbReference>
<dbReference type="InterPro" id="IPR036621">
    <property type="entry name" value="Anticodon-bd_dom_sf"/>
</dbReference>
<dbReference type="InterPro" id="IPR002316">
    <property type="entry name" value="Pro-tRNA-ligase_IIa"/>
</dbReference>
<dbReference type="InterPro" id="IPR004500">
    <property type="entry name" value="Pro-tRNA-synth_IIa_bac-type"/>
</dbReference>
<dbReference type="InterPro" id="IPR023717">
    <property type="entry name" value="Pro-tRNA-Synthase_IIa_type1"/>
</dbReference>
<dbReference type="InterPro" id="IPR050062">
    <property type="entry name" value="Pro-tRNA_synthetase"/>
</dbReference>
<dbReference type="InterPro" id="IPR044140">
    <property type="entry name" value="ProRS_anticodon_short"/>
</dbReference>
<dbReference type="InterPro" id="IPR033730">
    <property type="entry name" value="ProRS_core_prok"/>
</dbReference>
<dbReference type="InterPro" id="IPR036754">
    <property type="entry name" value="YbaK/aa-tRNA-synt-asso_dom_sf"/>
</dbReference>
<dbReference type="InterPro" id="IPR007214">
    <property type="entry name" value="YbaK/aa-tRNA-synth-assoc-dom"/>
</dbReference>
<dbReference type="NCBIfam" id="NF006625">
    <property type="entry name" value="PRK09194.1"/>
    <property type="match status" value="1"/>
</dbReference>
<dbReference type="NCBIfam" id="TIGR00409">
    <property type="entry name" value="proS_fam_II"/>
    <property type="match status" value="1"/>
</dbReference>
<dbReference type="PANTHER" id="PTHR42753">
    <property type="entry name" value="MITOCHONDRIAL RIBOSOME PROTEIN L39/PROLYL-TRNA LIGASE FAMILY MEMBER"/>
    <property type="match status" value="1"/>
</dbReference>
<dbReference type="PANTHER" id="PTHR42753:SF2">
    <property type="entry name" value="PROLINE--TRNA LIGASE"/>
    <property type="match status" value="1"/>
</dbReference>
<dbReference type="Pfam" id="PF03129">
    <property type="entry name" value="HGTP_anticodon"/>
    <property type="match status" value="1"/>
</dbReference>
<dbReference type="Pfam" id="PF00587">
    <property type="entry name" value="tRNA-synt_2b"/>
    <property type="match status" value="1"/>
</dbReference>
<dbReference type="Pfam" id="PF04073">
    <property type="entry name" value="tRNA_edit"/>
    <property type="match status" value="1"/>
</dbReference>
<dbReference type="PIRSF" id="PIRSF001535">
    <property type="entry name" value="ProRS_1"/>
    <property type="match status" value="1"/>
</dbReference>
<dbReference type="PRINTS" id="PR01046">
    <property type="entry name" value="TRNASYNTHPRO"/>
</dbReference>
<dbReference type="SUPFAM" id="SSF52954">
    <property type="entry name" value="Class II aaRS ABD-related"/>
    <property type="match status" value="1"/>
</dbReference>
<dbReference type="SUPFAM" id="SSF55681">
    <property type="entry name" value="Class II aaRS and biotin synthetases"/>
    <property type="match status" value="1"/>
</dbReference>
<dbReference type="SUPFAM" id="SSF55826">
    <property type="entry name" value="YbaK/ProRS associated domain"/>
    <property type="match status" value="1"/>
</dbReference>
<dbReference type="PROSITE" id="PS50862">
    <property type="entry name" value="AA_TRNA_LIGASE_II"/>
    <property type="match status" value="1"/>
</dbReference>
<organism>
    <name type="scientific">Hydrogenovibrio crunogenus (strain DSM 25203 / XCL-2)</name>
    <name type="common">Thiomicrospira crunogena</name>
    <dbReference type="NCBI Taxonomy" id="317025"/>
    <lineage>
        <taxon>Bacteria</taxon>
        <taxon>Pseudomonadati</taxon>
        <taxon>Pseudomonadota</taxon>
        <taxon>Gammaproteobacteria</taxon>
        <taxon>Thiotrichales</taxon>
        <taxon>Piscirickettsiaceae</taxon>
        <taxon>Hydrogenovibrio</taxon>
    </lineage>
</organism>
<gene>
    <name evidence="1" type="primary">proS</name>
    <name type="ordered locus">Tcr_1075</name>
</gene>
<reference key="1">
    <citation type="journal article" date="2006" name="PLoS Biol.">
        <title>The genome of deep-sea vent chemolithoautotroph Thiomicrospira crunogena XCL-2.</title>
        <authorList>
            <person name="Scott K.M."/>
            <person name="Sievert S.M."/>
            <person name="Abril F.N."/>
            <person name="Ball L.A."/>
            <person name="Barrett C.J."/>
            <person name="Blake R.A."/>
            <person name="Boller A.J."/>
            <person name="Chain P.S.G."/>
            <person name="Clark J.A."/>
            <person name="Davis C.R."/>
            <person name="Detter C."/>
            <person name="Do K.F."/>
            <person name="Dobrinski K.P."/>
            <person name="Faza B.I."/>
            <person name="Fitzpatrick K.A."/>
            <person name="Freyermuth S.K."/>
            <person name="Harmer T.L."/>
            <person name="Hauser L.J."/>
            <person name="Huegler M."/>
            <person name="Kerfeld C.A."/>
            <person name="Klotz M.G."/>
            <person name="Kong W.W."/>
            <person name="Land M."/>
            <person name="Lapidus A."/>
            <person name="Larimer F.W."/>
            <person name="Longo D.L."/>
            <person name="Lucas S."/>
            <person name="Malfatti S.A."/>
            <person name="Massey S.E."/>
            <person name="Martin D.D."/>
            <person name="McCuddin Z."/>
            <person name="Meyer F."/>
            <person name="Moore J.L."/>
            <person name="Ocampo L.H. Jr."/>
            <person name="Paul J.H."/>
            <person name="Paulsen I.T."/>
            <person name="Reep D.K."/>
            <person name="Ren Q."/>
            <person name="Ross R.L."/>
            <person name="Sato P.Y."/>
            <person name="Thomas P."/>
            <person name="Tinkham L.E."/>
            <person name="Zeruth G.T."/>
        </authorList>
    </citation>
    <scope>NUCLEOTIDE SEQUENCE [LARGE SCALE GENOMIC DNA]</scope>
    <source>
        <strain>DSM 25203 / XCL-2</strain>
    </source>
</reference>